<gene>
    <name type="primary">Crhbp</name>
</gene>
<comment type="function">
    <text>Binds CRF and inactivates it. May prevent inappropriate pituitary-adrenal stimulation in pregnancy.</text>
</comment>
<comment type="subcellular location">
    <subcellularLocation>
        <location evidence="1">Secreted</location>
    </subcellularLocation>
</comment>
<comment type="similarity">
    <text evidence="3">Belongs to the CRF-binding protein family.</text>
</comment>
<name>CRHBP_RAT</name>
<protein>
    <recommendedName>
        <fullName>Corticotropin-releasing factor-binding protein</fullName>
        <shortName>CRF-BP</shortName>
        <shortName>CRF-binding protein</shortName>
    </recommendedName>
    <alternativeName>
        <fullName>Corticotropin-releasing hormone-binding protein</fullName>
        <shortName>CRH-BP</shortName>
    </alternativeName>
</protein>
<keyword id="KW-1015">Disulfide bond</keyword>
<keyword id="KW-0325">Glycoprotein</keyword>
<keyword id="KW-1185">Reference proteome</keyword>
<keyword id="KW-0964">Secreted</keyword>
<keyword id="KW-0732">Signal</keyword>
<accession>P24388</accession>
<evidence type="ECO:0000250" key="1"/>
<evidence type="ECO:0000255" key="2"/>
<evidence type="ECO:0000305" key="3"/>
<organism>
    <name type="scientific">Rattus norvegicus</name>
    <name type="common">Rat</name>
    <dbReference type="NCBI Taxonomy" id="10116"/>
    <lineage>
        <taxon>Eukaryota</taxon>
        <taxon>Metazoa</taxon>
        <taxon>Chordata</taxon>
        <taxon>Craniata</taxon>
        <taxon>Vertebrata</taxon>
        <taxon>Euteleostomi</taxon>
        <taxon>Mammalia</taxon>
        <taxon>Eutheria</taxon>
        <taxon>Euarchontoglires</taxon>
        <taxon>Glires</taxon>
        <taxon>Rodentia</taxon>
        <taxon>Myomorpha</taxon>
        <taxon>Muroidea</taxon>
        <taxon>Muridae</taxon>
        <taxon>Murinae</taxon>
        <taxon>Rattus</taxon>
    </lineage>
</organism>
<sequence length="322" mass="36121">MSPNFKLQCHFTLILLTALRGESRYLEVQEAAVYDPFLLFSANLKRNLAEEQPYRRALRCLDMLSLPGQFTFTADQPQLHCAAFFIGEPEEFITIHFDLVSIDCQGGDFLKVFDGWILKGEKFPSSQDHPLPTRERYTDFCESGLTRRSVTSSQNVAMVFFRVHEPGNGFTITIKTDPNLFPCNIISQTPSGRFALVVPYQHQNCSFSIIYPVTIKISDLALGHLHGLQLKKPAAGCGGTGDFVELLGGTGLDTSKMMLLVDLCYPFHGPAQMKISCDNAVVRMVSSGKHMNRVTFEYRQLEPLELETSTRNSIPEYCLSSL</sequence>
<reference key="1">
    <citation type="journal article" date="1991" name="Nature">
        <title>Cloning and characterization of the cDNAs for human and rat corticotropin releasing factor-binding proteins.</title>
        <authorList>
            <person name="Potter E."/>
            <person name="Behan D.P."/>
            <person name="Fischer W.H."/>
            <person name="Linton E.A."/>
            <person name="Lowry P.J."/>
            <person name="Vale W.W."/>
        </authorList>
    </citation>
    <scope>NUCLEOTIDE SEQUENCE [MRNA]</scope>
</reference>
<feature type="signal peptide" evidence="1">
    <location>
        <begin position="1"/>
        <end position="24"/>
    </location>
</feature>
<feature type="chain" id="PRO_0000020996" description="Corticotropin-releasing factor-binding protein">
    <location>
        <begin position="25"/>
        <end position="322"/>
    </location>
</feature>
<feature type="glycosylation site" description="N-linked (GlcNAc...) asparagine" evidence="2">
    <location>
        <position position="204"/>
    </location>
</feature>
<feature type="disulfide bond" evidence="1">
    <location>
        <begin position="60"/>
        <end position="81"/>
    </location>
</feature>
<feature type="disulfide bond" evidence="1">
    <location>
        <begin position="104"/>
        <end position="141"/>
    </location>
</feature>
<feature type="disulfide bond" evidence="1">
    <location>
        <begin position="183"/>
        <end position="205"/>
    </location>
</feature>
<feature type="disulfide bond" evidence="1">
    <location>
        <begin position="237"/>
        <end position="264"/>
    </location>
</feature>
<feature type="disulfide bond" evidence="1">
    <location>
        <begin position="277"/>
        <end position="318"/>
    </location>
</feature>
<proteinExistence type="evidence at transcript level"/>
<dbReference type="EMBL" id="X58023">
    <property type="protein sequence ID" value="CAA41087.1"/>
    <property type="molecule type" value="mRNA"/>
</dbReference>
<dbReference type="PIR" id="S13955">
    <property type="entry name" value="S13955"/>
</dbReference>
<dbReference type="FunCoup" id="P24388">
    <property type="interactions" value="31"/>
</dbReference>
<dbReference type="STRING" id="10116.ENSRNOP00000024191"/>
<dbReference type="GlyCosmos" id="P24388">
    <property type="glycosylation" value="1 site, No reported glycans"/>
</dbReference>
<dbReference type="GlyGen" id="P24388">
    <property type="glycosylation" value="1 site"/>
</dbReference>
<dbReference type="PhosphoSitePlus" id="P24388"/>
<dbReference type="PaxDb" id="10116-ENSRNOP00000024191"/>
<dbReference type="UCSC" id="RGD:2403">
    <property type="organism name" value="rat"/>
</dbReference>
<dbReference type="AGR" id="RGD:2403"/>
<dbReference type="RGD" id="2403">
    <property type="gene designation" value="Crhbp"/>
</dbReference>
<dbReference type="eggNOG" id="ENOG502QRNI">
    <property type="taxonomic scope" value="Eukaryota"/>
</dbReference>
<dbReference type="InParanoid" id="P24388"/>
<dbReference type="OrthoDB" id="10056927at2759"/>
<dbReference type="PhylomeDB" id="P24388"/>
<dbReference type="Reactome" id="R-RNO-373080">
    <property type="pathway name" value="Class B/2 (Secretin family receptors)"/>
</dbReference>
<dbReference type="PRO" id="PR:P24388"/>
<dbReference type="Proteomes" id="UP000002494">
    <property type="component" value="Unplaced"/>
</dbReference>
<dbReference type="GO" id="GO:0043679">
    <property type="term" value="C:axon terminus"/>
    <property type="evidence" value="ECO:0000314"/>
    <property type="project" value="RGD"/>
</dbReference>
<dbReference type="GO" id="GO:0030425">
    <property type="term" value="C:dendrite"/>
    <property type="evidence" value="ECO:0000314"/>
    <property type="project" value="RGD"/>
</dbReference>
<dbReference type="GO" id="GO:0031045">
    <property type="term" value="C:dense core granule"/>
    <property type="evidence" value="ECO:0000314"/>
    <property type="project" value="RGD"/>
</dbReference>
<dbReference type="GO" id="GO:0005615">
    <property type="term" value="C:extracellular space"/>
    <property type="evidence" value="ECO:0000314"/>
    <property type="project" value="RGD"/>
</dbReference>
<dbReference type="GO" id="GO:0005874">
    <property type="term" value="C:microtubule"/>
    <property type="evidence" value="ECO:0000314"/>
    <property type="project" value="RGD"/>
</dbReference>
<dbReference type="GO" id="GO:0005771">
    <property type="term" value="C:multivesicular body"/>
    <property type="evidence" value="ECO:0000314"/>
    <property type="project" value="RGD"/>
</dbReference>
<dbReference type="GO" id="GO:0005634">
    <property type="term" value="C:nucleus"/>
    <property type="evidence" value="ECO:0000250"/>
    <property type="project" value="UniProtKB"/>
</dbReference>
<dbReference type="GO" id="GO:0043204">
    <property type="term" value="C:perikaryon"/>
    <property type="evidence" value="ECO:0000314"/>
    <property type="project" value="RGD"/>
</dbReference>
<dbReference type="GO" id="GO:0005767">
    <property type="term" value="C:secondary lysosome"/>
    <property type="evidence" value="ECO:0000314"/>
    <property type="project" value="RGD"/>
</dbReference>
<dbReference type="GO" id="GO:0030141">
    <property type="term" value="C:secretory granule"/>
    <property type="evidence" value="ECO:0000250"/>
    <property type="project" value="UniProtKB"/>
</dbReference>
<dbReference type="GO" id="GO:0043196">
    <property type="term" value="C:varicosity"/>
    <property type="evidence" value="ECO:0000314"/>
    <property type="project" value="RGD"/>
</dbReference>
<dbReference type="GO" id="GO:0051424">
    <property type="term" value="F:corticotropin-releasing hormone binding"/>
    <property type="evidence" value="ECO:0000314"/>
    <property type="project" value="RGD"/>
</dbReference>
<dbReference type="GO" id="GO:0042277">
    <property type="term" value="F:peptide binding"/>
    <property type="evidence" value="ECO:0000314"/>
    <property type="project" value="RGD"/>
</dbReference>
<dbReference type="GO" id="GO:0048149">
    <property type="term" value="P:behavioral response to ethanol"/>
    <property type="evidence" value="ECO:0000250"/>
    <property type="project" value="UniProtKB"/>
</dbReference>
<dbReference type="GO" id="GO:0071277">
    <property type="term" value="P:cellular response to calcium ion"/>
    <property type="evidence" value="ECO:0000250"/>
    <property type="project" value="UniProtKB"/>
</dbReference>
<dbReference type="GO" id="GO:0071320">
    <property type="term" value="P:cellular response to cAMP"/>
    <property type="evidence" value="ECO:0000250"/>
    <property type="project" value="UniProtKB"/>
</dbReference>
<dbReference type="GO" id="GO:0071314">
    <property type="term" value="P:cellular response to cocaine"/>
    <property type="evidence" value="ECO:0000314"/>
    <property type="project" value="UniProtKB"/>
</dbReference>
<dbReference type="GO" id="GO:0071392">
    <property type="term" value="P:cellular response to estradiol stimulus"/>
    <property type="evidence" value="ECO:0000314"/>
    <property type="project" value="UniProtKB"/>
</dbReference>
<dbReference type="GO" id="GO:0071391">
    <property type="term" value="P:cellular response to estrogen stimulus"/>
    <property type="evidence" value="ECO:0000314"/>
    <property type="project" value="UniProtKB"/>
</dbReference>
<dbReference type="GO" id="GO:0097211">
    <property type="term" value="P:cellular response to gonadotropin-releasing hormone"/>
    <property type="evidence" value="ECO:0000250"/>
    <property type="project" value="UniProtKB"/>
</dbReference>
<dbReference type="GO" id="GO:0035903">
    <property type="term" value="P:cellular response to immobilization stress"/>
    <property type="evidence" value="ECO:0000314"/>
    <property type="project" value="UniProtKB"/>
</dbReference>
<dbReference type="GO" id="GO:0035865">
    <property type="term" value="P:cellular response to potassium ion"/>
    <property type="evidence" value="ECO:0000250"/>
    <property type="project" value="UniProtKB"/>
</dbReference>
<dbReference type="GO" id="GO:0071356">
    <property type="term" value="P:cellular response to tumor necrosis factor"/>
    <property type="evidence" value="ECO:0000250"/>
    <property type="project" value="UniProtKB"/>
</dbReference>
<dbReference type="GO" id="GO:0071466">
    <property type="term" value="P:cellular response to xenobiotic stimulus"/>
    <property type="evidence" value="ECO:0000250"/>
    <property type="project" value="UniProtKB"/>
</dbReference>
<dbReference type="GO" id="GO:0007565">
    <property type="term" value="P:female pregnancy"/>
    <property type="evidence" value="ECO:0000266"/>
    <property type="project" value="RGD"/>
</dbReference>
<dbReference type="GO" id="GO:0042445">
    <property type="term" value="P:hormone metabolic process"/>
    <property type="evidence" value="ECO:0000270"/>
    <property type="project" value="RGD"/>
</dbReference>
<dbReference type="GO" id="GO:0009755">
    <property type="term" value="P:hormone-mediated signaling pathway"/>
    <property type="evidence" value="ECO:0000250"/>
    <property type="project" value="UniProtKB"/>
</dbReference>
<dbReference type="GO" id="GO:0006954">
    <property type="term" value="P:inflammatory response"/>
    <property type="evidence" value="ECO:0000250"/>
    <property type="project" value="UniProtKB"/>
</dbReference>
<dbReference type="GO" id="GO:0002125">
    <property type="term" value="P:maternal aggressive behavior"/>
    <property type="evidence" value="ECO:0000250"/>
    <property type="project" value="UniProtKB"/>
</dbReference>
<dbReference type="GO" id="GO:0051460">
    <property type="term" value="P:negative regulation of corticotropin secretion"/>
    <property type="evidence" value="ECO:0000314"/>
    <property type="project" value="UniProtKB"/>
</dbReference>
<dbReference type="GO" id="GO:1900011">
    <property type="term" value="P:negative regulation of corticotropin-releasing hormone receptor activity"/>
    <property type="evidence" value="ECO:0000250"/>
    <property type="project" value="UniProtKB"/>
</dbReference>
<dbReference type="GO" id="GO:0045055">
    <property type="term" value="P:regulated exocytosis"/>
    <property type="evidence" value="ECO:0000250"/>
    <property type="project" value="UniProtKB"/>
</dbReference>
<dbReference type="GO" id="GO:0080135">
    <property type="term" value="P:regulation of cellular response to stress"/>
    <property type="evidence" value="ECO:0000266"/>
    <property type="project" value="RGD"/>
</dbReference>
<dbReference type="GO" id="GO:0051459">
    <property type="term" value="P:regulation of corticotropin secretion"/>
    <property type="evidence" value="ECO:0000250"/>
    <property type="project" value="UniProtKB"/>
</dbReference>
<dbReference type="GO" id="GO:2000310">
    <property type="term" value="P:regulation of NMDA receptor activity"/>
    <property type="evidence" value="ECO:0000250"/>
    <property type="project" value="UniProtKB"/>
</dbReference>
<dbReference type="GO" id="GO:0001963">
    <property type="term" value="P:synaptic transmission, dopaminergic"/>
    <property type="evidence" value="ECO:0000270"/>
    <property type="project" value="UniProtKB"/>
</dbReference>
<dbReference type="Gene3D" id="2.60.120.290">
    <property type="entry name" value="Spermadhesin, CUB domain"/>
    <property type="match status" value="1"/>
</dbReference>
<dbReference type="InterPro" id="IPR008435">
    <property type="entry name" value="CRF-bd"/>
</dbReference>
<dbReference type="InterPro" id="IPR056178">
    <property type="entry name" value="CRF-BP_C"/>
</dbReference>
<dbReference type="InterPro" id="IPR056177">
    <property type="entry name" value="CRF-BP_N"/>
</dbReference>
<dbReference type="InterPro" id="IPR035914">
    <property type="entry name" value="Sperma_CUB_dom_sf"/>
</dbReference>
<dbReference type="PANTHER" id="PTHR10278">
    <property type="entry name" value="CORTICOTROPIN-RELEASING FACTOR-BINDING PROTEIN"/>
    <property type="match status" value="1"/>
</dbReference>
<dbReference type="PANTHER" id="PTHR10278:SF0">
    <property type="entry name" value="CORTICOTROPIN-RELEASING FACTOR-BINDING PROTEIN"/>
    <property type="match status" value="1"/>
</dbReference>
<dbReference type="Pfam" id="PF23541">
    <property type="entry name" value="CRF-BP_C"/>
    <property type="match status" value="1"/>
</dbReference>
<dbReference type="Pfam" id="PF05428">
    <property type="entry name" value="CRF-BP_N"/>
    <property type="match status" value="1"/>
</dbReference>
<dbReference type="PIRSF" id="PIRSF009279">
    <property type="entry name" value="CRF_bd"/>
    <property type="match status" value="1"/>
</dbReference>
<dbReference type="SUPFAM" id="SSF49854">
    <property type="entry name" value="Spermadhesin, CUB domain"/>
    <property type="match status" value="1"/>
</dbReference>